<feature type="chain" id="PRO_0000079974" description="2-deoxyglucose-6-phosphate phosphatase 1">
    <location>
        <begin position="1"/>
        <end position="246"/>
    </location>
</feature>
<feature type="active site" description="Nucleophile" evidence="2">
    <location>
        <position position="83"/>
    </location>
</feature>
<feature type="binding site" evidence="2">
    <location>
        <position position="83"/>
    </location>
    <ligand>
        <name>Mg(2+)</name>
        <dbReference type="ChEBI" id="CHEBI:18420"/>
    </ligand>
</feature>
<feature type="binding site" evidence="1">
    <location>
        <position position="83"/>
    </location>
    <ligand>
        <name>substrate</name>
    </ligand>
</feature>
<feature type="binding site" evidence="1">
    <location>
        <position position="92"/>
    </location>
    <ligand>
        <name>substrate</name>
    </ligand>
</feature>
<feature type="binding site" evidence="1">
    <location>
        <begin position="146"/>
        <end position="149"/>
    </location>
    <ligand>
        <name>substrate</name>
    </ligand>
</feature>
<feature type="binding site" evidence="2">
    <location>
        <position position="183"/>
    </location>
    <ligand>
        <name>Mg(2+)</name>
        <dbReference type="ChEBI" id="CHEBI:18420"/>
    </ligand>
</feature>
<sequence>MAEFSADLCLFDLDGTIVSTTVAAEKAWTKLCYEYGVDPSELFKHSHGARTQEVLRRFFPKLDDTDNKGVLALEKDIAHSYLDTVSLIPGAENLLLSLDVDTETQKKLPERKWAIVTSGSPYLAFSWFETILKNVGKPKVFITGFDVKNGKPDPEGYSRARDLLRQDLQLTGKQDLKYVVFEDAPVGIKAGKAMGAITVGITSSYDKSVLFDAGADYVVCDLTQVSVVKNNENGIVIQVNNPLTRA</sequence>
<dbReference type="EC" id="3.1.3.68" evidence="4"/>
<dbReference type="EMBL" id="U03107">
    <property type="protein sequence ID" value="AAC48923.1"/>
    <property type="molecule type" value="Genomic_DNA"/>
</dbReference>
<dbReference type="EMBL" id="U00062">
    <property type="protein sequence ID" value="AAB68917.1"/>
    <property type="molecule type" value="Genomic_DNA"/>
</dbReference>
<dbReference type="EMBL" id="AY558516">
    <property type="protein sequence ID" value="AAS56842.1"/>
    <property type="molecule type" value="Genomic_DNA"/>
</dbReference>
<dbReference type="EMBL" id="BK006934">
    <property type="protein sequence ID" value="DAA06736.1"/>
    <property type="molecule type" value="Genomic_DNA"/>
</dbReference>
<dbReference type="PIR" id="S46604">
    <property type="entry name" value="S46604"/>
</dbReference>
<dbReference type="RefSeq" id="NP_011910.1">
    <property type="nucleotide sequence ID" value="NM_001179174.1"/>
</dbReference>
<dbReference type="SMR" id="P38774"/>
<dbReference type="BioGRID" id="36476">
    <property type="interactions" value="69"/>
</dbReference>
<dbReference type="DIP" id="DIP-6336N"/>
<dbReference type="FunCoup" id="P38774">
    <property type="interactions" value="251"/>
</dbReference>
<dbReference type="IntAct" id="P38774">
    <property type="interactions" value="5"/>
</dbReference>
<dbReference type="STRING" id="4932.YHR044C"/>
<dbReference type="PaxDb" id="4932-YHR044C"/>
<dbReference type="PeptideAtlas" id="P38774"/>
<dbReference type="EnsemblFungi" id="YHR044C_mRNA">
    <property type="protein sequence ID" value="YHR044C"/>
    <property type="gene ID" value="YHR044C"/>
</dbReference>
<dbReference type="GeneID" id="856440"/>
<dbReference type="KEGG" id="sce:YHR044C"/>
<dbReference type="AGR" id="SGD:S000001086"/>
<dbReference type="SGD" id="S000001086">
    <property type="gene designation" value="DOG1"/>
</dbReference>
<dbReference type="VEuPathDB" id="FungiDB:YHR044C"/>
<dbReference type="eggNOG" id="KOG2914">
    <property type="taxonomic scope" value="Eukaryota"/>
</dbReference>
<dbReference type="GeneTree" id="ENSGT00940000176801"/>
<dbReference type="HOGENOM" id="CLU_045011_13_4_1"/>
<dbReference type="InParanoid" id="P38774"/>
<dbReference type="OMA" id="NYEHRVR"/>
<dbReference type="OrthoDB" id="40579at2759"/>
<dbReference type="BioCyc" id="YEAST:YHR044C-MONOMER"/>
<dbReference type="BRENDA" id="3.1.3.68">
    <property type="organism ID" value="984"/>
</dbReference>
<dbReference type="BioGRID-ORCS" id="856440">
    <property type="hits" value="3 hits in 10 CRISPR screens"/>
</dbReference>
<dbReference type="PRO" id="PR:P38774"/>
<dbReference type="Proteomes" id="UP000002311">
    <property type="component" value="Chromosome VIII"/>
</dbReference>
<dbReference type="RNAct" id="P38774">
    <property type="molecule type" value="protein"/>
</dbReference>
<dbReference type="GO" id="GO:0003850">
    <property type="term" value="F:2-deoxyglucose-6-phosphatase activity"/>
    <property type="evidence" value="ECO:0000314"/>
    <property type="project" value="SGD"/>
</dbReference>
<dbReference type="GO" id="GO:0046872">
    <property type="term" value="F:metal ion binding"/>
    <property type="evidence" value="ECO:0007669"/>
    <property type="project" value="UniProtKB-KW"/>
</dbReference>
<dbReference type="GO" id="GO:0005975">
    <property type="term" value="P:carbohydrate metabolic process"/>
    <property type="evidence" value="ECO:0000318"/>
    <property type="project" value="GO_Central"/>
</dbReference>
<dbReference type="GO" id="GO:0006006">
    <property type="term" value="P:glucose metabolic process"/>
    <property type="evidence" value="ECO:0000314"/>
    <property type="project" value="SGD"/>
</dbReference>
<dbReference type="CDD" id="cd07527">
    <property type="entry name" value="HAD_ScGPP-like"/>
    <property type="match status" value="1"/>
</dbReference>
<dbReference type="Gene3D" id="3.40.50.1000">
    <property type="entry name" value="HAD superfamily/HAD-like"/>
    <property type="match status" value="1"/>
</dbReference>
<dbReference type="Gene3D" id="1.10.150.240">
    <property type="entry name" value="Putative phosphatase, domain 2"/>
    <property type="match status" value="1"/>
</dbReference>
<dbReference type="InterPro" id="IPR036412">
    <property type="entry name" value="HAD-like_sf"/>
</dbReference>
<dbReference type="InterPro" id="IPR051806">
    <property type="entry name" value="HAD-like_SPP"/>
</dbReference>
<dbReference type="InterPro" id="IPR006439">
    <property type="entry name" value="HAD-SF_hydro_IA"/>
</dbReference>
<dbReference type="InterPro" id="IPR023214">
    <property type="entry name" value="HAD_sf"/>
</dbReference>
<dbReference type="InterPro" id="IPR023198">
    <property type="entry name" value="PGP-like_dom2"/>
</dbReference>
<dbReference type="NCBIfam" id="TIGR01509">
    <property type="entry name" value="HAD-SF-IA-v3"/>
    <property type="match status" value="1"/>
</dbReference>
<dbReference type="PANTHER" id="PTHR43481:SF9">
    <property type="entry name" value="2-DEOXYGLUCOSE-6-PHOSPHATE PHOSPHATASE 1-RELATED"/>
    <property type="match status" value="1"/>
</dbReference>
<dbReference type="PANTHER" id="PTHR43481">
    <property type="entry name" value="FRUCTOSE-1-PHOSPHATE PHOSPHATASE"/>
    <property type="match status" value="1"/>
</dbReference>
<dbReference type="Pfam" id="PF00702">
    <property type="entry name" value="Hydrolase"/>
    <property type="match status" value="1"/>
</dbReference>
<dbReference type="SFLD" id="SFLDF00031">
    <property type="entry name" value="2-deoxyglucose-6-phosphatase"/>
    <property type="match status" value="1"/>
</dbReference>
<dbReference type="SFLD" id="SFLDS00003">
    <property type="entry name" value="Haloacid_Dehalogenase"/>
    <property type="match status" value="1"/>
</dbReference>
<dbReference type="SUPFAM" id="SSF56784">
    <property type="entry name" value="HAD-like"/>
    <property type="match status" value="1"/>
</dbReference>
<keyword id="KW-0378">Hydrolase</keyword>
<keyword id="KW-0460">Magnesium</keyword>
<keyword id="KW-0479">Metal-binding</keyword>
<keyword id="KW-1185">Reference proteome</keyword>
<proteinExistence type="evidence at protein level"/>
<organism>
    <name type="scientific">Saccharomyces cerevisiae (strain ATCC 204508 / S288c)</name>
    <name type="common">Baker's yeast</name>
    <dbReference type="NCBI Taxonomy" id="559292"/>
    <lineage>
        <taxon>Eukaryota</taxon>
        <taxon>Fungi</taxon>
        <taxon>Dikarya</taxon>
        <taxon>Ascomycota</taxon>
        <taxon>Saccharomycotina</taxon>
        <taxon>Saccharomycetes</taxon>
        <taxon>Saccharomycetales</taxon>
        <taxon>Saccharomycetaceae</taxon>
        <taxon>Saccharomyces</taxon>
    </lineage>
</organism>
<gene>
    <name evidence="5" type="primary">DOG1</name>
    <name type="ordered locus">YHR044C</name>
</gene>
<name>DOG1_YEAST</name>
<comment type="function">
    <text evidence="4">Phosphatase that is active on 2-deoxy-D-glucose 6-phosphate (2-DOG-6P), as well as on fructose-1-P.</text>
</comment>
<comment type="catalytic activity">
    <reaction evidence="4">
        <text>2-deoxy-D-glucose 6-phosphate + H2O = 2-deoxy-D-glucose + phosphate</text>
        <dbReference type="Rhea" id="RHEA:22236"/>
        <dbReference type="ChEBI" id="CHEBI:15377"/>
        <dbReference type="ChEBI" id="CHEBI:43474"/>
        <dbReference type="ChEBI" id="CHEBI:84755"/>
        <dbReference type="ChEBI" id="CHEBI:84760"/>
        <dbReference type="EC" id="3.1.3.68"/>
    </reaction>
</comment>
<comment type="cofactor">
    <cofactor evidence="2">
        <name>Mg(2+)</name>
        <dbReference type="ChEBI" id="CHEBI:18420"/>
    </cofactor>
</comment>
<comment type="biophysicochemical properties">
    <kinetics>
        <KM evidence="4">17 mM for 2-deoxy-D-glucose 6-phosphate</KM>
    </kinetics>
    <phDependence>
        <text evidence="4">Optimum pH is 6.</text>
    </phDependence>
    <temperatureDependence>
        <text evidence="4">Optimum temperature is 30 degrees Celsius.</text>
    </temperatureDependence>
</comment>
<comment type="miscellaneous">
    <text evidence="3">Present with 752 molecules/cell in log phase SD medium.</text>
</comment>
<comment type="similarity">
    <text evidence="6">Belongs to the HAD-like hydrolase superfamily. DOG/GPP family.</text>
</comment>
<accession>P38774</accession>
<accession>D3DKZ2</accession>
<accession>P38923</accession>
<reference key="1">
    <citation type="journal article" date="1994" name="Yeast">
        <title>Molecular characterization of a gene that confers 2-deoxyglucose resistance in yeast.</title>
        <authorList>
            <person name="Sanz P."/>
            <person name="Randez-Gil F."/>
            <person name="Prieto J.A."/>
        </authorList>
    </citation>
    <scope>NUCLEOTIDE SEQUENCE [GENOMIC DNA]</scope>
</reference>
<reference key="2">
    <citation type="journal article" date="1994" name="Science">
        <title>Complete nucleotide sequence of Saccharomyces cerevisiae chromosome VIII.</title>
        <authorList>
            <person name="Johnston M."/>
            <person name="Andrews S."/>
            <person name="Brinkman R."/>
            <person name="Cooper J."/>
            <person name="Ding H."/>
            <person name="Dover J."/>
            <person name="Du Z."/>
            <person name="Favello A."/>
            <person name="Fulton L."/>
            <person name="Gattung S."/>
            <person name="Geisel C."/>
            <person name="Kirsten J."/>
            <person name="Kucaba T."/>
            <person name="Hillier L.W."/>
            <person name="Jier M."/>
            <person name="Johnston L."/>
            <person name="Langston Y."/>
            <person name="Latreille P."/>
            <person name="Louis E.J."/>
            <person name="Macri C."/>
            <person name="Mardis E."/>
            <person name="Menezes S."/>
            <person name="Mouser L."/>
            <person name="Nhan M."/>
            <person name="Rifkin L."/>
            <person name="Riles L."/>
            <person name="St Peter H."/>
            <person name="Trevaskis E."/>
            <person name="Vaughan K."/>
            <person name="Vignati D."/>
            <person name="Wilcox L."/>
            <person name="Wohldman P."/>
            <person name="Waterston R."/>
            <person name="Wilson R."/>
            <person name="Vaudin M."/>
        </authorList>
    </citation>
    <scope>NUCLEOTIDE SEQUENCE [LARGE SCALE GENOMIC DNA]</scope>
    <source>
        <strain>ATCC 204508 / S288c</strain>
    </source>
</reference>
<reference key="3">
    <citation type="journal article" date="2014" name="G3 (Bethesda)">
        <title>The reference genome sequence of Saccharomyces cerevisiae: Then and now.</title>
        <authorList>
            <person name="Engel S.R."/>
            <person name="Dietrich F.S."/>
            <person name="Fisk D.G."/>
            <person name="Binkley G."/>
            <person name="Balakrishnan R."/>
            <person name="Costanzo M.C."/>
            <person name="Dwight S.S."/>
            <person name="Hitz B.C."/>
            <person name="Karra K."/>
            <person name="Nash R.S."/>
            <person name="Weng S."/>
            <person name="Wong E.D."/>
            <person name="Lloyd P."/>
            <person name="Skrzypek M.S."/>
            <person name="Miyasato S.R."/>
            <person name="Simison M."/>
            <person name="Cherry J.M."/>
        </authorList>
    </citation>
    <scope>GENOME REANNOTATION</scope>
    <source>
        <strain>ATCC 204508 / S288c</strain>
    </source>
</reference>
<reference key="4">
    <citation type="journal article" date="2007" name="Genome Res.">
        <title>Approaching a complete repository of sequence-verified protein-encoding clones for Saccharomyces cerevisiae.</title>
        <authorList>
            <person name="Hu Y."/>
            <person name="Rolfs A."/>
            <person name="Bhullar B."/>
            <person name="Murthy T.V.S."/>
            <person name="Zhu C."/>
            <person name="Berger M.F."/>
            <person name="Camargo A.A."/>
            <person name="Kelley F."/>
            <person name="McCarron S."/>
            <person name="Jepson D."/>
            <person name="Richardson A."/>
            <person name="Raphael J."/>
            <person name="Moreira D."/>
            <person name="Taycher E."/>
            <person name="Zuo D."/>
            <person name="Mohr S."/>
            <person name="Kane M.F."/>
            <person name="Williamson J."/>
            <person name="Simpson A.J.G."/>
            <person name="Bulyk M.L."/>
            <person name="Harlow E."/>
            <person name="Marsischky G."/>
            <person name="Kolodner R.D."/>
            <person name="LaBaer J."/>
        </authorList>
    </citation>
    <scope>NUCLEOTIDE SEQUENCE [GENOMIC DNA]</scope>
    <source>
        <strain>ATCC 204508 / S288c</strain>
    </source>
</reference>
<reference key="5">
    <citation type="journal article" date="1995" name="Yeast">
        <title>DOGR1 and DOGR2: two genes from Saccharomyces cerevisiae that confer 2-deoxyglucose resistance when overexpressed.</title>
        <authorList>
            <person name="Randez-Gil F."/>
            <person name="Blasco A."/>
            <person name="Prieto J.A."/>
            <person name="Sanz P."/>
        </authorList>
    </citation>
    <scope>N</scope>
    <scope>FUNCTION</scope>
    <scope>CATALYTIC ACTIVITY</scope>
    <scope>BIOPHYSICOCHEMICAL PROPERTIES</scope>
</reference>
<reference key="6">
    <citation type="journal article" date="2003" name="Nature">
        <title>Global analysis of protein expression in yeast.</title>
        <authorList>
            <person name="Ghaemmaghami S."/>
            <person name="Huh W.-K."/>
            <person name="Bower K."/>
            <person name="Howson R.W."/>
            <person name="Belle A."/>
            <person name="Dephoure N."/>
            <person name="O'Shea E.K."/>
            <person name="Weissman J.S."/>
        </authorList>
    </citation>
    <scope>LEVEL OF PROTEIN EXPRESSION [LARGE SCALE ANALYSIS]</scope>
</reference>
<protein>
    <recommendedName>
        <fullName evidence="5">2-deoxyglucose-6-phosphate phosphatase 1</fullName>
        <shortName evidence="5">2-DOG-6-P 1</shortName>
        <shortName evidence="5">2-deoxyglucose-6-phosphatase 1</shortName>
        <ecNumber evidence="4">3.1.3.68</ecNumber>
    </recommendedName>
</protein>
<evidence type="ECO:0000250" key="1">
    <source>
        <dbReference type="UniProtKB" id="P95649"/>
    </source>
</evidence>
<evidence type="ECO:0000250" key="2">
    <source>
        <dbReference type="UniProtKB" id="Q94K71"/>
    </source>
</evidence>
<evidence type="ECO:0000269" key="3">
    <source>
    </source>
</evidence>
<evidence type="ECO:0000269" key="4">
    <source>
    </source>
</evidence>
<evidence type="ECO:0000303" key="5">
    <source>
    </source>
</evidence>
<evidence type="ECO:0000305" key="6"/>